<geneLocation type="chloroplast"/>
<feature type="chain" id="PRO_0000362915" description="ATP synthase subunit c, chloroplastic">
    <location>
        <begin position="1"/>
        <end position="81"/>
    </location>
</feature>
<feature type="transmembrane region" description="Helical" evidence="1">
    <location>
        <begin position="3"/>
        <end position="23"/>
    </location>
</feature>
<feature type="transmembrane region" description="Helical" evidence="1">
    <location>
        <begin position="57"/>
        <end position="77"/>
    </location>
</feature>
<feature type="site" description="Reversibly protonated during proton transport" evidence="1">
    <location>
        <position position="61"/>
    </location>
</feature>
<protein>
    <recommendedName>
        <fullName evidence="1">ATP synthase subunit c, chloroplastic</fullName>
    </recommendedName>
    <alternativeName>
        <fullName evidence="1">ATP synthase F(0) sector subunit c</fullName>
    </alternativeName>
    <alternativeName>
        <fullName evidence="1">ATPase subunit III</fullName>
    </alternativeName>
    <alternativeName>
        <fullName evidence="1">F-type ATPase subunit c</fullName>
        <shortName evidence="1">F-ATPase subunit c</shortName>
    </alternativeName>
    <alternativeName>
        <fullName evidence="1">Lipid-binding protein</fullName>
    </alternativeName>
</protein>
<name>ATPH_EUCGG</name>
<keyword id="KW-0066">ATP synthesis</keyword>
<keyword id="KW-0138">CF(0)</keyword>
<keyword id="KW-0150">Chloroplast</keyword>
<keyword id="KW-0375">Hydrogen ion transport</keyword>
<keyword id="KW-0406">Ion transport</keyword>
<keyword id="KW-0446">Lipid-binding</keyword>
<keyword id="KW-0472">Membrane</keyword>
<keyword id="KW-0934">Plastid</keyword>
<keyword id="KW-0793">Thylakoid</keyword>
<keyword id="KW-0812">Transmembrane</keyword>
<keyword id="KW-1133">Transmembrane helix</keyword>
<keyword id="KW-0813">Transport</keyword>
<sequence>MNPLISAASVIAAGLAVGLASIGPGVGQGTAAGQAVEGIARQPEAEGKIRGTLLLSLAFMEALTIYGLVVALALLFANPFV</sequence>
<reference key="1">
    <citation type="journal article" date="2005" name="DNA Res.">
        <title>Complete nucleotide sequence of the chloroplast genome from the Tasmanian blue gum, Eucalyptus globulus (Myrtaceae).</title>
        <authorList>
            <person name="Steane D.A."/>
        </authorList>
    </citation>
    <scope>NUCLEOTIDE SEQUENCE [LARGE SCALE GENOMIC DNA]</scope>
</reference>
<comment type="function">
    <text evidence="1">F(1)F(0) ATP synthase produces ATP from ADP in the presence of a proton or sodium gradient. F-type ATPases consist of two structural domains, F(1) containing the extramembraneous catalytic core and F(0) containing the membrane proton channel, linked together by a central stalk and a peripheral stalk. During catalysis, ATP synthesis in the catalytic domain of F(1) is coupled via a rotary mechanism of the central stalk subunits to proton translocation.</text>
</comment>
<comment type="function">
    <text evidence="1">Key component of the F(0) channel; it plays a direct role in translocation across the membrane. A homomeric c-ring of between 10-14 subunits forms the central stalk rotor element with the F(1) delta and epsilon subunits.</text>
</comment>
<comment type="subunit">
    <text evidence="1">F-type ATPases have 2 components, F(1) - the catalytic core - and F(0) - the membrane proton channel. F(1) has five subunits: alpha(3), beta(3), gamma(1), delta(1), epsilon(1). F(0) has four main subunits: a(1), b(1), b'(1) and c(10-14). The alpha and beta chains form an alternating ring which encloses part of the gamma chain. F(1) is attached to F(0) by a central stalk formed by the gamma and epsilon chains, while a peripheral stalk is formed by the delta, b and b' chains.</text>
</comment>
<comment type="subcellular location">
    <subcellularLocation>
        <location evidence="1">Plastid</location>
        <location evidence="1">Chloroplast thylakoid membrane</location>
        <topology evidence="1">Multi-pass membrane protein</topology>
    </subcellularLocation>
</comment>
<comment type="miscellaneous">
    <text>In plastids the F-type ATPase is also known as CF(1)CF(0).</text>
</comment>
<comment type="similarity">
    <text evidence="1">Belongs to the ATPase C chain family.</text>
</comment>
<proteinExistence type="inferred from homology"/>
<organism>
    <name type="scientific">Eucalyptus globulus subsp. globulus</name>
    <name type="common">Tasmanian blue gum</name>
    <dbReference type="NCBI Taxonomy" id="71271"/>
    <lineage>
        <taxon>Eukaryota</taxon>
        <taxon>Viridiplantae</taxon>
        <taxon>Streptophyta</taxon>
        <taxon>Embryophyta</taxon>
        <taxon>Tracheophyta</taxon>
        <taxon>Spermatophyta</taxon>
        <taxon>Magnoliopsida</taxon>
        <taxon>eudicotyledons</taxon>
        <taxon>Gunneridae</taxon>
        <taxon>Pentapetalae</taxon>
        <taxon>rosids</taxon>
        <taxon>malvids</taxon>
        <taxon>Myrtales</taxon>
        <taxon>Myrtaceae</taxon>
        <taxon>Myrtoideae</taxon>
        <taxon>Eucalypteae</taxon>
        <taxon>Eucalyptus</taxon>
    </lineage>
</organism>
<evidence type="ECO:0000255" key="1">
    <source>
        <dbReference type="HAMAP-Rule" id="MF_01396"/>
    </source>
</evidence>
<gene>
    <name evidence="1" type="primary">atpH</name>
</gene>
<accession>Q49L11</accession>
<dbReference type="EMBL" id="AY780259">
    <property type="protein sequence ID" value="AAX21016.1"/>
    <property type="molecule type" value="Genomic_DNA"/>
</dbReference>
<dbReference type="RefSeq" id="YP_636286.1">
    <property type="nucleotide sequence ID" value="NC_008115.1"/>
</dbReference>
<dbReference type="SMR" id="Q49L11"/>
<dbReference type="GeneID" id="4108479"/>
<dbReference type="GO" id="GO:0009535">
    <property type="term" value="C:chloroplast thylakoid membrane"/>
    <property type="evidence" value="ECO:0007669"/>
    <property type="project" value="UniProtKB-SubCell"/>
</dbReference>
<dbReference type="GO" id="GO:0045259">
    <property type="term" value="C:proton-transporting ATP synthase complex"/>
    <property type="evidence" value="ECO:0007669"/>
    <property type="project" value="UniProtKB-KW"/>
</dbReference>
<dbReference type="GO" id="GO:0033177">
    <property type="term" value="C:proton-transporting two-sector ATPase complex, proton-transporting domain"/>
    <property type="evidence" value="ECO:0007669"/>
    <property type="project" value="InterPro"/>
</dbReference>
<dbReference type="GO" id="GO:0008289">
    <property type="term" value="F:lipid binding"/>
    <property type="evidence" value="ECO:0007669"/>
    <property type="project" value="UniProtKB-KW"/>
</dbReference>
<dbReference type="GO" id="GO:0046933">
    <property type="term" value="F:proton-transporting ATP synthase activity, rotational mechanism"/>
    <property type="evidence" value="ECO:0007669"/>
    <property type="project" value="UniProtKB-UniRule"/>
</dbReference>
<dbReference type="CDD" id="cd18183">
    <property type="entry name" value="ATP-synt_Fo_c_ATPH"/>
    <property type="match status" value="1"/>
</dbReference>
<dbReference type="FunFam" id="1.20.20.10:FF:000001">
    <property type="entry name" value="ATP synthase subunit c, chloroplastic"/>
    <property type="match status" value="1"/>
</dbReference>
<dbReference type="Gene3D" id="1.20.20.10">
    <property type="entry name" value="F1F0 ATP synthase subunit C"/>
    <property type="match status" value="1"/>
</dbReference>
<dbReference type="HAMAP" id="MF_01396">
    <property type="entry name" value="ATP_synth_c_bact"/>
    <property type="match status" value="1"/>
</dbReference>
<dbReference type="InterPro" id="IPR005953">
    <property type="entry name" value="ATP_synth_csu_bac/chlpt"/>
</dbReference>
<dbReference type="InterPro" id="IPR000454">
    <property type="entry name" value="ATP_synth_F0_csu"/>
</dbReference>
<dbReference type="InterPro" id="IPR020537">
    <property type="entry name" value="ATP_synth_F0_csu_DDCD_BS"/>
</dbReference>
<dbReference type="InterPro" id="IPR038662">
    <property type="entry name" value="ATP_synth_F0_csu_sf"/>
</dbReference>
<dbReference type="InterPro" id="IPR002379">
    <property type="entry name" value="ATPase_proteolipid_c-like_dom"/>
</dbReference>
<dbReference type="InterPro" id="IPR035921">
    <property type="entry name" value="F/V-ATP_Csub_sf"/>
</dbReference>
<dbReference type="NCBIfam" id="TIGR01260">
    <property type="entry name" value="ATP_synt_c"/>
    <property type="match status" value="1"/>
</dbReference>
<dbReference type="NCBIfam" id="NF005608">
    <property type="entry name" value="PRK07354.1"/>
    <property type="match status" value="1"/>
</dbReference>
<dbReference type="PANTHER" id="PTHR10031">
    <property type="entry name" value="ATP SYNTHASE LIPID-BINDING PROTEIN, MITOCHONDRIAL"/>
    <property type="match status" value="1"/>
</dbReference>
<dbReference type="PANTHER" id="PTHR10031:SF0">
    <property type="entry name" value="ATPASE PROTEIN 9"/>
    <property type="match status" value="1"/>
</dbReference>
<dbReference type="Pfam" id="PF00137">
    <property type="entry name" value="ATP-synt_C"/>
    <property type="match status" value="1"/>
</dbReference>
<dbReference type="PRINTS" id="PR00124">
    <property type="entry name" value="ATPASEC"/>
</dbReference>
<dbReference type="SUPFAM" id="SSF81333">
    <property type="entry name" value="F1F0 ATP synthase subunit C"/>
    <property type="match status" value="1"/>
</dbReference>
<dbReference type="PROSITE" id="PS00605">
    <property type="entry name" value="ATPASE_C"/>
    <property type="match status" value="1"/>
</dbReference>